<sequence length="435" mass="49250">MFILTMGLNHHTAPIDIREKLVFKETEEEMALVTLQQEKSILENVIISTCNRTEIVAVVDQIHTGRYYLKRFMANWFQMDMEKIEPYLFFHEETEAVNHLYKVTAGLDSLVLGETQILGQVKHAFEIAKQTETTGTLLNKLFREVVTFAKKVHHHTKINENAVSVSYAAVEVAKKLYGSLDNKKIVLVGAGEMSELALQNLAGSGIADITIINRTKSNAELLANQFQAKVGAYENMNEHLMLADIVLVSTSATEPIIKQAAMQDLMEQKASSMLVIDIGLPRNVEHDCSYIPNFHLYDIDDLAGVVSANSLERQRIVLELENTIEVEVRNFFEWEKQLGVVPVIRALREKALDMQEVAMTSLENKLPGLTEREYIQIGKHMKSIINQMLKQPISELKEMSVEEDATTSIEHFKRIFGLSETDVTVIEKEQAETRS</sequence>
<proteinExistence type="inferred from homology"/>
<evidence type="ECO:0000255" key="1">
    <source>
        <dbReference type="HAMAP-Rule" id="MF_00087"/>
    </source>
</evidence>
<reference key="1">
    <citation type="journal article" date="2001" name="Science">
        <title>Comparative genomics of Listeria species.</title>
        <authorList>
            <person name="Glaser P."/>
            <person name="Frangeul L."/>
            <person name="Buchrieser C."/>
            <person name="Rusniok C."/>
            <person name="Amend A."/>
            <person name="Baquero F."/>
            <person name="Berche P."/>
            <person name="Bloecker H."/>
            <person name="Brandt P."/>
            <person name="Chakraborty T."/>
            <person name="Charbit A."/>
            <person name="Chetouani F."/>
            <person name="Couve E."/>
            <person name="de Daruvar A."/>
            <person name="Dehoux P."/>
            <person name="Domann E."/>
            <person name="Dominguez-Bernal G."/>
            <person name="Duchaud E."/>
            <person name="Durant L."/>
            <person name="Dussurget O."/>
            <person name="Entian K.-D."/>
            <person name="Fsihi H."/>
            <person name="Garcia-del Portillo F."/>
            <person name="Garrido P."/>
            <person name="Gautier L."/>
            <person name="Goebel W."/>
            <person name="Gomez-Lopez N."/>
            <person name="Hain T."/>
            <person name="Hauf J."/>
            <person name="Jackson D."/>
            <person name="Jones L.-M."/>
            <person name="Kaerst U."/>
            <person name="Kreft J."/>
            <person name="Kuhn M."/>
            <person name="Kunst F."/>
            <person name="Kurapkat G."/>
            <person name="Madueno E."/>
            <person name="Maitournam A."/>
            <person name="Mata Vicente J."/>
            <person name="Ng E."/>
            <person name="Nedjari H."/>
            <person name="Nordsiek G."/>
            <person name="Novella S."/>
            <person name="de Pablos B."/>
            <person name="Perez-Diaz J.-C."/>
            <person name="Purcell R."/>
            <person name="Remmel B."/>
            <person name="Rose M."/>
            <person name="Schlueter T."/>
            <person name="Simoes N."/>
            <person name="Tierrez A."/>
            <person name="Vazquez-Boland J.-A."/>
            <person name="Voss H."/>
            <person name="Wehland J."/>
            <person name="Cossart P."/>
        </authorList>
    </citation>
    <scope>NUCLEOTIDE SEQUENCE [LARGE SCALE GENOMIC DNA]</scope>
    <source>
        <strain>ATCC BAA-679 / EGD-e</strain>
    </source>
</reference>
<dbReference type="EC" id="1.2.1.70" evidence="1"/>
<dbReference type="EMBL" id="AL591979">
    <property type="protein sequence ID" value="CAC99635.1"/>
    <property type="molecule type" value="Genomic_DNA"/>
</dbReference>
<dbReference type="PIR" id="AE1269">
    <property type="entry name" value="AE1269"/>
</dbReference>
<dbReference type="RefSeq" id="NP_465082.1">
    <property type="nucleotide sequence ID" value="NC_003210.1"/>
</dbReference>
<dbReference type="RefSeq" id="WP_003723241.1">
    <property type="nucleotide sequence ID" value="NZ_CP149495.1"/>
</dbReference>
<dbReference type="SMR" id="Q8Y6X4"/>
<dbReference type="STRING" id="169963.gene:17594214"/>
<dbReference type="PaxDb" id="169963-lmo1557"/>
<dbReference type="EnsemblBacteria" id="CAC99635">
    <property type="protein sequence ID" value="CAC99635"/>
    <property type="gene ID" value="CAC99635"/>
</dbReference>
<dbReference type="GeneID" id="986920"/>
<dbReference type="KEGG" id="lmo:lmo1557"/>
<dbReference type="PATRIC" id="fig|169963.11.peg.1598"/>
<dbReference type="eggNOG" id="COG0373">
    <property type="taxonomic scope" value="Bacteria"/>
</dbReference>
<dbReference type="HOGENOM" id="CLU_035113_2_2_9"/>
<dbReference type="OrthoDB" id="110209at2"/>
<dbReference type="PhylomeDB" id="Q8Y6X4"/>
<dbReference type="BioCyc" id="LMON169963:LMO1557-MONOMER"/>
<dbReference type="UniPathway" id="UPA00251">
    <property type="reaction ID" value="UER00316"/>
</dbReference>
<dbReference type="Proteomes" id="UP000000817">
    <property type="component" value="Chromosome"/>
</dbReference>
<dbReference type="GO" id="GO:0008883">
    <property type="term" value="F:glutamyl-tRNA reductase activity"/>
    <property type="evidence" value="ECO:0007669"/>
    <property type="project" value="UniProtKB-UniRule"/>
</dbReference>
<dbReference type="GO" id="GO:0050661">
    <property type="term" value="F:NADP binding"/>
    <property type="evidence" value="ECO:0007669"/>
    <property type="project" value="InterPro"/>
</dbReference>
<dbReference type="GO" id="GO:0006782">
    <property type="term" value="P:protoporphyrinogen IX biosynthetic process"/>
    <property type="evidence" value="ECO:0007669"/>
    <property type="project" value="UniProtKB-UniRule"/>
</dbReference>
<dbReference type="CDD" id="cd05213">
    <property type="entry name" value="NAD_bind_Glutamyl_tRNA_reduct"/>
    <property type="match status" value="1"/>
</dbReference>
<dbReference type="FunFam" id="3.30.460.30:FF:000001">
    <property type="entry name" value="Glutamyl-tRNA reductase"/>
    <property type="match status" value="1"/>
</dbReference>
<dbReference type="FunFam" id="3.40.50.720:FF:000031">
    <property type="entry name" value="Glutamyl-tRNA reductase"/>
    <property type="match status" value="1"/>
</dbReference>
<dbReference type="Gene3D" id="3.30.460.30">
    <property type="entry name" value="Glutamyl-tRNA reductase, N-terminal domain"/>
    <property type="match status" value="1"/>
</dbReference>
<dbReference type="Gene3D" id="3.40.50.720">
    <property type="entry name" value="NAD(P)-binding Rossmann-like Domain"/>
    <property type="match status" value="1"/>
</dbReference>
<dbReference type="HAMAP" id="MF_00087">
    <property type="entry name" value="Glu_tRNA_reductase"/>
    <property type="match status" value="1"/>
</dbReference>
<dbReference type="InterPro" id="IPR000343">
    <property type="entry name" value="4pyrrol_synth_GluRdtase"/>
</dbReference>
<dbReference type="InterPro" id="IPR015896">
    <property type="entry name" value="4pyrrol_synth_GluRdtase_dimer"/>
</dbReference>
<dbReference type="InterPro" id="IPR015895">
    <property type="entry name" value="4pyrrol_synth_GluRdtase_N"/>
</dbReference>
<dbReference type="InterPro" id="IPR018214">
    <property type="entry name" value="GluRdtase_CS"/>
</dbReference>
<dbReference type="InterPro" id="IPR036453">
    <property type="entry name" value="GluRdtase_dimer_dom_sf"/>
</dbReference>
<dbReference type="InterPro" id="IPR036343">
    <property type="entry name" value="GluRdtase_N_sf"/>
</dbReference>
<dbReference type="InterPro" id="IPR036291">
    <property type="entry name" value="NAD(P)-bd_dom_sf"/>
</dbReference>
<dbReference type="InterPro" id="IPR006151">
    <property type="entry name" value="Shikm_DH/Glu-tRNA_Rdtase"/>
</dbReference>
<dbReference type="NCBIfam" id="TIGR01035">
    <property type="entry name" value="hemA"/>
    <property type="match status" value="1"/>
</dbReference>
<dbReference type="PANTHER" id="PTHR43120">
    <property type="entry name" value="GLUTAMYL-TRNA REDUCTASE 1, CHLOROPLASTIC"/>
    <property type="match status" value="1"/>
</dbReference>
<dbReference type="PANTHER" id="PTHR43120:SF1">
    <property type="entry name" value="GLUTAMYL-TRNA REDUCTASE 1, CHLOROPLASTIC"/>
    <property type="match status" value="1"/>
</dbReference>
<dbReference type="Pfam" id="PF00745">
    <property type="entry name" value="GlutR_dimer"/>
    <property type="match status" value="1"/>
</dbReference>
<dbReference type="Pfam" id="PF05201">
    <property type="entry name" value="GlutR_N"/>
    <property type="match status" value="1"/>
</dbReference>
<dbReference type="Pfam" id="PF01488">
    <property type="entry name" value="Shikimate_DH"/>
    <property type="match status" value="1"/>
</dbReference>
<dbReference type="PIRSF" id="PIRSF000445">
    <property type="entry name" value="4pyrrol_synth_GluRdtase"/>
    <property type="match status" value="1"/>
</dbReference>
<dbReference type="SUPFAM" id="SSF69742">
    <property type="entry name" value="Glutamyl tRNA-reductase catalytic, N-terminal domain"/>
    <property type="match status" value="1"/>
</dbReference>
<dbReference type="SUPFAM" id="SSF69075">
    <property type="entry name" value="Glutamyl tRNA-reductase dimerization domain"/>
    <property type="match status" value="1"/>
</dbReference>
<dbReference type="SUPFAM" id="SSF51735">
    <property type="entry name" value="NAD(P)-binding Rossmann-fold domains"/>
    <property type="match status" value="1"/>
</dbReference>
<dbReference type="PROSITE" id="PS00747">
    <property type="entry name" value="GLUTR"/>
    <property type="match status" value="1"/>
</dbReference>
<gene>
    <name evidence="1" type="primary">hemA</name>
    <name type="ordered locus">lmo1557</name>
</gene>
<feature type="chain" id="PRO_0000114037" description="Glutamyl-tRNA reductase">
    <location>
        <begin position="1"/>
        <end position="435"/>
    </location>
</feature>
<feature type="active site" description="Nucleophile" evidence="1">
    <location>
        <position position="50"/>
    </location>
</feature>
<feature type="binding site" evidence="1">
    <location>
        <begin position="49"/>
        <end position="52"/>
    </location>
    <ligand>
        <name>substrate</name>
    </ligand>
</feature>
<feature type="binding site" evidence="1">
    <location>
        <position position="109"/>
    </location>
    <ligand>
        <name>substrate</name>
    </ligand>
</feature>
<feature type="binding site" evidence="1">
    <location>
        <begin position="114"/>
        <end position="116"/>
    </location>
    <ligand>
        <name>substrate</name>
    </ligand>
</feature>
<feature type="binding site" evidence="1">
    <location>
        <position position="120"/>
    </location>
    <ligand>
        <name>substrate</name>
    </ligand>
</feature>
<feature type="binding site" evidence="1">
    <location>
        <begin position="189"/>
        <end position="194"/>
    </location>
    <ligand>
        <name>NADP(+)</name>
        <dbReference type="ChEBI" id="CHEBI:58349"/>
    </ligand>
</feature>
<feature type="site" description="Important for activity" evidence="1">
    <location>
        <position position="99"/>
    </location>
</feature>
<comment type="function">
    <text evidence="1">Catalyzes the NADPH-dependent reduction of glutamyl-tRNA(Glu) to glutamate 1-semialdehyde (GSA).</text>
</comment>
<comment type="catalytic activity">
    <reaction evidence="1">
        <text>(S)-4-amino-5-oxopentanoate + tRNA(Glu) + NADP(+) = L-glutamyl-tRNA(Glu) + NADPH + H(+)</text>
        <dbReference type="Rhea" id="RHEA:12344"/>
        <dbReference type="Rhea" id="RHEA-COMP:9663"/>
        <dbReference type="Rhea" id="RHEA-COMP:9680"/>
        <dbReference type="ChEBI" id="CHEBI:15378"/>
        <dbReference type="ChEBI" id="CHEBI:57501"/>
        <dbReference type="ChEBI" id="CHEBI:57783"/>
        <dbReference type="ChEBI" id="CHEBI:58349"/>
        <dbReference type="ChEBI" id="CHEBI:78442"/>
        <dbReference type="ChEBI" id="CHEBI:78520"/>
        <dbReference type="EC" id="1.2.1.70"/>
    </reaction>
</comment>
<comment type="pathway">
    <text evidence="1">Porphyrin-containing compound metabolism; protoporphyrin-IX biosynthesis; 5-aminolevulinate from L-glutamyl-tRNA(Glu): step 1/2.</text>
</comment>
<comment type="subunit">
    <text evidence="1">Homodimer.</text>
</comment>
<comment type="domain">
    <text evidence="1">Possesses an unusual extended V-shaped dimeric structure with each monomer consisting of three distinct domains arranged along a curved 'spinal' alpha-helix. The N-terminal catalytic domain specifically recognizes the glutamate moiety of the substrate. The second domain is the NADPH-binding domain, and the third C-terminal domain is responsible for dimerization.</text>
</comment>
<comment type="miscellaneous">
    <text evidence="1">During catalysis, the active site Cys acts as a nucleophile attacking the alpha-carbonyl group of tRNA-bound glutamate with the formation of a thioester intermediate between enzyme and glutamate, and the concomitant release of tRNA(Glu). The thioester intermediate is finally reduced by direct hydride transfer from NADPH, to form the product GSA.</text>
</comment>
<comment type="similarity">
    <text evidence="1">Belongs to the glutamyl-tRNA reductase family.</text>
</comment>
<name>HEM1_LISMO</name>
<keyword id="KW-0521">NADP</keyword>
<keyword id="KW-0560">Oxidoreductase</keyword>
<keyword id="KW-0627">Porphyrin biosynthesis</keyword>
<keyword id="KW-1185">Reference proteome</keyword>
<organism>
    <name type="scientific">Listeria monocytogenes serovar 1/2a (strain ATCC BAA-679 / EGD-e)</name>
    <dbReference type="NCBI Taxonomy" id="169963"/>
    <lineage>
        <taxon>Bacteria</taxon>
        <taxon>Bacillati</taxon>
        <taxon>Bacillota</taxon>
        <taxon>Bacilli</taxon>
        <taxon>Bacillales</taxon>
        <taxon>Listeriaceae</taxon>
        <taxon>Listeria</taxon>
    </lineage>
</organism>
<protein>
    <recommendedName>
        <fullName evidence="1">Glutamyl-tRNA reductase</fullName>
        <shortName evidence="1">GluTR</shortName>
        <ecNumber evidence="1">1.2.1.70</ecNumber>
    </recommendedName>
</protein>
<accession>Q8Y6X4</accession>